<reference key="1">
    <citation type="journal article" date="1997" name="Nature">
        <title>The complete genome sequence of the gastric pathogen Helicobacter pylori.</title>
        <authorList>
            <person name="Tomb J.-F."/>
            <person name="White O."/>
            <person name="Kerlavage A.R."/>
            <person name="Clayton R.A."/>
            <person name="Sutton G.G."/>
            <person name="Fleischmann R.D."/>
            <person name="Ketchum K.A."/>
            <person name="Klenk H.-P."/>
            <person name="Gill S.R."/>
            <person name="Dougherty B.A."/>
            <person name="Nelson K.E."/>
            <person name="Quackenbush J."/>
            <person name="Zhou L."/>
            <person name="Kirkness E.F."/>
            <person name="Peterson S.N."/>
            <person name="Loftus B.J."/>
            <person name="Richardson D.L."/>
            <person name="Dodson R.J."/>
            <person name="Khalak H.G."/>
            <person name="Glodek A."/>
            <person name="McKenney K."/>
            <person name="FitzGerald L.M."/>
            <person name="Lee N."/>
            <person name="Adams M.D."/>
            <person name="Hickey E.K."/>
            <person name="Berg D.E."/>
            <person name="Gocayne J.D."/>
            <person name="Utterback T.R."/>
            <person name="Peterson J.D."/>
            <person name="Kelley J.M."/>
            <person name="Cotton M.D."/>
            <person name="Weidman J.F."/>
            <person name="Fujii C."/>
            <person name="Bowman C."/>
            <person name="Watthey L."/>
            <person name="Wallin E."/>
            <person name="Hayes W.S."/>
            <person name="Borodovsky M."/>
            <person name="Karp P.D."/>
            <person name="Smith H.O."/>
            <person name="Fraser C.M."/>
            <person name="Venter J.C."/>
        </authorList>
    </citation>
    <scope>NUCLEOTIDE SEQUENCE [LARGE SCALE GENOMIC DNA]</scope>
    <source>
        <strain>ATCC 700392 / 26695</strain>
    </source>
</reference>
<name>TRPA_HELPY</name>
<proteinExistence type="inferred from homology"/>
<gene>
    <name evidence="1" type="primary">trpA</name>
    <name type="ordered locus">HP_1277</name>
</gene>
<feature type="chain" id="PRO_0000098789" description="Tryptophan synthase alpha chain">
    <location>
        <begin position="1"/>
        <end position="262"/>
    </location>
</feature>
<feature type="active site" description="Proton acceptor" evidence="1">
    <location>
        <position position="48"/>
    </location>
</feature>
<feature type="active site" description="Proton acceptor" evidence="1">
    <location>
        <position position="59"/>
    </location>
</feature>
<organism>
    <name type="scientific">Helicobacter pylori (strain ATCC 700392 / 26695)</name>
    <name type="common">Campylobacter pylori</name>
    <dbReference type="NCBI Taxonomy" id="85962"/>
    <lineage>
        <taxon>Bacteria</taxon>
        <taxon>Pseudomonadati</taxon>
        <taxon>Campylobacterota</taxon>
        <taxon>Epsilonproteobacteria</taxon>
        <taxon>Campylobacterales</taxon>
        <taxon>Helicobacteraceae</taxon>
        <taxon>Helicobacter</taxon>
    </lineage>
</organism>
<keyword id="KW-0028">Amino-acid biosynthesis</keyword>
<keyword id="KW-0057">Aromatic amino acid biosynthesis</keyword>
<keyword id="KW-0456">Lyase</keyword>
<keyword id="KW-1185">Reference proteome</keyword>
<keyword id="KW-0822">Tryptophan biosynthesis</keyword>
<sequence length="262" mass="28594">MRYQNMFETLKKHEKMAFIPFVTLGDPNYELSFEIIKTLIISGVSALELGLAFSDPVADGITIQASHLRALKHASMAKNFQLLKKIRDYNHNIPIGLLAYANLIFSYGVDGFYAQAKECGIDSVLIADMPLIEKELVIKSAQKHQIKQIFIASPNASSKDLEQVATHSQGYIYALARSGVTGASRILENDSSAIIKTLKAFSPTPALLGFGISKKEHITNAKGMGADGVICGSALVKIIEENLNNENAMLEKIKGFIGGMIF</sequence>
<comment type="function">
    <text evidence="1">The alpha subunit is responsible for the aldol cleavage of indoleglycerol phosphate to indole and glyceraldehyde 3-phosphate.</text>
</comment>
<comment type="catalytic activity">
    <reaction evidence="1">
        <text>(1S,2R)-1-C-(indol-3-yl)glycerol 3-phosphate + L-serine = D-glyceraldehyde 3-phosphate + L-tryptophan + H2O</text>
        <dbReference type="Rhea" id="RHEA:10532"/>
        <dbReference type="ChEBI" id="CHEBI:15377"/>
        <dbReference type="ChEBI" id="CHEBI:33384"/>
        <dbReference type="ChEBI" id="CHEBI:57912"/>
        <dbReference type="ChEBI" id="CHEBI:58866"/>
        <dbReference type="ChEBI" id="CHEBI:59776"/>
        <dbReference type="EC" id="4.2.1.20"/>
    </reaction>
</comment>
<comment type="pathway">
    <text evidence="1">Amino-acid biosynthesis; L-tryptophan biosynthesis; L-tryptophan from chorismate: step 5/5.</text>
</comment>
<comment type="subunit">
    <text evidence="1">Tetramer of two alpha and two beta chains.</text>
</comment>
<comment type="similarity">
    <text evidence="1">Belongs to the TrpA family.</text>
</comment>
<accession>P56141</accession>
<evidence type="ECO:0000255" key="1">
    <source>
        <dbReference type="HAMAP-Rule" id="MF_00131"/>
    </source>
</evidence>
<protein>
    <recommendedName>
        <fullName evidence="1">Tryptophan synthase alpha chain</fullName>
        <ecNumber evidence="1">4.2.1.20</ecNumber>
    </recommendedName>
</protein>
<dbReference type="EC" id="4.2.1.20" evidence="1"/>
<dbReference type="EMBL" id="AE000511">
    <property type="protein sequence ID" value="AAD08322.1"/>
    <property type="molecule type" value="Genomic_DNA"/>
</dbReference>
<dbReference type="PIR" id="E64679">
    <property type="entry name" value="E64679"/>
</dbReference>
<dbReference type="RefSeq" id="NP_208069.1">
    <property type="nucleotide sequence ID" value="NC_000915.1"/>
</dbReference>
<dbReference type="RefSeq" id="WP_001270319.1">
    <property type="nucleotide sequence ID" value="NC_018939.1"/>
</dbReference>
<dbReference type="SMR" id="P56141"/>
<dbReference type="FunCoup" id="P56141">
    <property type="interactions" value="372"/>
</dbReference>
<dbReference type="IntAct" id="P56141">
    <property type="interactions" value="1"/>
</dbReference>
<dbReference type="STRING" id="85962.HP_1277"/>
<dbReference type="PaxDb" id="85962-C694_06600"/>
<dbReference type="EnsemblBacteria" id="AAD08322">
    <property type="protein sequence ID" value="AAD08322"/>
    <property type="gene ID" value="HP_1277"/>
</dbReference>
<dbReference type="KEGG" id="heo:C694_06600"/>
<dbReference type="KEGG" id="hpy:HP_1277"/>
<dbReference type="PATRIC" id="fig|85962.47.peg.1370"/>
<dbReference type="eggNOG" id="COG0159">
    <property type="taxonomic scope" value="Bacteria"/>
</dbReference>
<dbReference type="InParanoid" id="P56141"/>
<dbReference type="OrthoDB" id="9804578at2"/>
<dbReference type="PhylomeDB" id="P56141"/>
<dbReference type="UniPathway" id="UPA00035">
    <property type="reaction ID" value="UER00044"/>
</dbReference>
<dbReference type="Proteomes" id="UP000000429">
    <property type="component" value="Chromosome"/>
</dbReference>
<dbReference type="GO" id="GO:0005829">
    <property type="term" value="C:cytosol"/>
    <property type="evidence" value="ECO:0000318"/>
    <property type="project" value="GO_Central"/>
</dbReference>
<dbReference type="GO" id="GO:0004834">
    <property type="term" value="F:tryptophan synthase activity"/>
    <property type="evidence" value="ECO:0000318"/>
    <property type="project" value="GO_Central"/>
</dbReference>
<dbReference type="GO" id="GO:0000162">
    <property type="term" value="P:L-tryptophan biosynthetic process"/>
    <property type="evidence" value="ECO:0000318"/>
    <property type="project" value="GO_Central"/>
</dbReference>
<dbReference type="CDD" id="cd04724">
    <property type="entry name" value="Tryptophan_synthase_alpha"/>
    <property type="match status" value="1"/>
</dbReference>
<dbReference type="FunFam" id="3.20.20.70:FF:000037">
    <property type="entry name" value="Tryptophan synthase alpha chain"/>
    <property type="match status" value="1"/>
</dbReference>
<dbReference type="Gene3D" id="3.20.20.70">
    <property type="entry name" value="Aldolase class I"/>
    <property type="match status" value="1"/>
</dbReference>
<dbReference type="HAMAP" id="MF_00131">
    <property type="entry name" value="Trp_synth_alpha"/>
    <property type="match status" value="1"/>
</dbReference>
<dbReference type="InterPro" id="IPR013785">
    <property type="entry name" value="Aldolase_TIM"/>
</dbReference>
<dbReference type="InterPro" id="IPR011060">
    <property type="entry name" value="RibuloseP-bd_barrel"/>
</dbReference>
<dbReference type="InterPro" id="IPR018204">
    <property type="entry name" value="Trp_synthase_alpha_AS"/>
</dbReference>
<dbReference type="InterPro" id="IPR002028">
    <property type="entry name" value="Trp_synthase_suA"/>
</dbReference>
<dbReference type="NCBIfam" id="TIGR00262">
    <property type="entry name" value="trpA"/>
    <property type="match status" value="1"/>
</dbReference>
<dbReference type="PANTHER" id="PTHR43406:SF1">
    <property type="entry name" value="TRYPTOPHAN SYNTHASE ALPHA CHAIN, CHLOROPLASTIC"/>
    <property type="match status" value="1"/>
</dbReference>
<dbReference type="PANTHER" id="PTHR43406">
    <property type="entry name" value="TRYPTOPHAN SYNTHASE, ALPHA CHAIN"/>
    <property type="match status" value="1"/>
</dbReference>
<dbReference type="Pfam" id="PF00290">
    <property type="entry name" value="Trp_syntA"/>
    <property type="match status" value="1"/>
</dbReference>
<dbReference type="SUPFAM" id="SSF51366">
    <property type="entry name" value="Ribulose-phoshate binding barrel"/>
    <property type="match status" value="1"/>
</dbReference>
<dbReference type="PROSITE" id="PS00167">
    <property type="entry name" value="TRP_SYNTHASE_ALPHA"/>
    <property type="match status" value="1"/>
</dbReference>